<accession>A5TY71</accession>
<sequence length="385" mass="42212">MYVRHLGLRDFRSWACVDLELHPGRTVFVGPNGYGKTNLIEALWYSTTLGSHRVSADLPLIRVGTDRAVISTIVVNDGRECAVDLEIATGRVNKARLNRSSVRSTRDVVGVLRAVLFAPEDLGLVRGDPADRRRYLDDLAIVRRPAIAAVRAEYERVLRQRTALLKSVPGARYRGDRGVFDTLEVWDSRLAEHGAELVAARIDLVNQLAPEVKKAYQLLAPESRSASIGYRASMDVTGPSEQSDIDRQLLAARLLAALAARRDAELERGVCLVGPHRDDLILRLGDQPAKGFASHGEAWSLAVALRLAAYQLLRVDGGEPVLLLDDVFAELDVMRRRALATAAESAEQVLVTAAVLEDIPAGWDARRVHIDVRADDTGSMSVVLP</sequence>
<proteinExistence type="inferred from homology"/>
<reference key="1">
    <citation type="journal article" date="2008" name="PLoS ONE">
        <title>Genetic basis of virulence attenuation revealed by comparative genomic analysis of Mycobacterium tuberculosis strain H37Ra versus H37Rv.</title>
        <authorList>
            <person name="Zheng H."/>
            <person name="Lu L."/>
            <person name="Wang B."/>
            <person name="Pu S."/>
            <person name="Zhang X."/>
            <person name="Zhu G."/>
            <person name="Shi W."/>
            <person name="Zhang L."/>
            <person name="Wang H."/>
            <person name="Wang S."/>
            <person name="Zhao G."/>
            <person name="Zhang Y."/>
        </authorList>
    </citation>
    <scope>NUCLEOTIDE SEQUENCE [LARGE SCALE GENOMIC DNA]</scope>
    <source>
        <strain>ATCC 25177 / H37Ra</strain>
    </source>
</reference>
<comment type="function">
    <text evidence="1">The RecF protein is involved in DNA metabolism; it is required for DNA replication and normal SOS inducibility. RecF binds preferentially to single-stranded, linear DNA. It also seems to bind ATP.</text>
</comment>
<comment type="subcellular location">
    <subcellularLocation>
        <location evidence="1">Cytoplasm</location>
    </subcellularLocation>
</comment>
<comment type="similarity">
    <text evidence="1">Belongs to the RecF family.</text>
</comment>
<gene>
    <name evidence="1" type="primary">recF</name>
    <name type="ordered locus">MRA_0003</name>
</gene>
<evidence type="ECO:0000255" key="1">
    <source>
        <dbReference type="HAMAP-Rule" id="MF_00365"/>
    </source>
</evidence>
<dbReference type="EMBL" id="CP000611">
    <property type="protein sequence ID" value="ABQ71721.1"/>
    <property type="molecule type" value="Genomic_DNA"/>
</dbReference>
<dbReference type="RefSeq" id="WP_003912365.1">
    <property type="nucleotide sequence ID" value="NZ_CP016972.1"/>
</dbReference>
<dbReference type="SMR" id="A5TY71"/>
<dbReference type="KEGG" id="mra:MRA_0003"/>
<dbReference type="eggNOG" id="COG1195">
    <property type="taxonomic scope" value="Bacteria"/>
</dbReference>
<dbReference type="HOGENOM" id="CLU_040267_1_1_11"/>
<dbReference type="Proteomes" id="UP000001988">
    <property type="component" value="Chromosome"/>
</dbReference>
<dbReference type="GO" id="GO:0005737">
    <property type="term" value="C:cytoplasm"/>
    <property type="evidence" value="ECO:0007669"/>
    <property type="project" value="UniProtKB-SubCell"/>
</dbReference>
<dbReference type="GO" id="GO:0005524">
    <property type="term" value="F:ATP binding"/>
    <property type="evidence" value="ECO:0007669"/>
    <property type="project" value="UniProtKB-UniRule"/>
</dbReference>
<dbReference type="GO" id="GO:0003697">
    <property type="term" value="F:single-stranded DNA binding"/>
    <property type="evidence" value="ECO:0007669"/>
    <property type="project" value="UniProtKB-UniRule"/>
</dbReference>
<dbReference type="GO" id="GO:0006260">
    <property type="term" value="P:DNA replication"/>
    <property type="evidence" value="ECO:0007669"/>
    <property type="project" value="UniProtKB-UniRule"/>
</dbReference>
<dbReference type="GO" id="GO:0000731">
    <property type="term" value="P:DNA synthesis involved in DNA repair"/>
    <property type="evidence" value="ECO:0007669"/>
    <property type="project" value="TreeGrafter"/>
</dbReference>
<dbReference type="GO" id="GO:0006302">
    <property type="term" value="P:double-strand break repair"/>
    <property type="evidence" value="ECO:0007669"/>
    <property type="project" value="TreeGrafter"/>
</dbReference>
<dbReference type="GO" id="GO:0009432">
    <property type="term" value="P:SOS response"/>
    <property type="evidence" value="ECO:0007669"/>
    <property type="project" value="UniProtKB-UniRule"/>
</dbReference>
<dbReference type="CDD" id="cd03242">
    <property type="entry name" value="ABC_RecF"/>
    <property type="match status" value="1"/>
</dbReference>
<dbReference type="Gene3D" id="3.40.50.300">
    <property type="entry name" value="P-loop containing nucleotide triphosphate hydrolases"/>
    <property type="match status" value="1"/>
</dbReference>
<dbReference type="Gene3D" id="1.20.1050.90">
    <property type="entry name" value="RecF/RecN/SMC, N-terminal domain"/>
    <property type="match status" value="1"/>
</dbReference>
<dbReference type="HAMAP" id="MF_00365">
    <property type="entry name" value="RecF"/>
    <property type="match status" value="1"/>
</dbReference>
<dbReference type="InterPro" id="IPR001238">
    <property type="entry name" value="DNA-binding_RecF"/>
</dbReference>
<dbReference type="InterPro" id="IPR018078">
    <property type="entry name" value="DNA-binding_RecF_CS"/>
</dbReference>
<dbReference type="InterPro" id="IPR027417">
    <property type="entry name" value="P-loop_NTPase"/>
</dbReference>
<dbReference type="InterPro" id="IPR003395">
    <property type="entry name" value="RecF/RecN/SMC_N"/>
</dbReference>
<dbReference type="InterPro" id="IPR042174">
    <property type="entry name" value="RecF_2"/>
</dbReference>
<dbReference type="NCBIfam" id="TIGR00611">
    <property type="entry name" value="recf"/>
    <property type="match status" value="1"/>
</dbReference>
<dbReference type="PANTHER" id="PTHR32182">
    <property type="entry name" value="DNA REPLICATION AND REPAIR PROTEIN RECF"/>
    <property type="match status" value="1"/>
</dbReference>
<dbReference type="PANTHER" id="PTHR32182:SF0">
    <property type="entry name" value="DNA REPLICATION AND REPAIR PROTEIN RECF"/>
    <property type="match status" value="1"/>
</dbReference>
<dbReference type="Pfam" id="PF02463">
    <property type="entry name" value="SMC_N"/>
    <property type="match status" value="1"/>
</dbReference>
<dbReference type="SUPFAM" id="SSF52540">
    <property type="entry name" value="P-loop containing nucleoside triphosphate hydrolases"/>
    <property type="match status" value="1"/>
</dbReference>
<dbReference type="PROSITE" id="PS00617">
    <property type="entry name" value="RECF_1"/>
    <property type="match status" value="1"/>
</dbReference>
<dbReference type="PROSITE" id="PS00618">
    <property type="entry name" value="RECF_2"/>
    <property type="match status" value="1"/>
</dbReference>
<keyword id="KW-0067">ATP-binding</keyword>
<keyword id="KW-0963">Cytoplasm</keyword>
<keyword id="KW-0227">DNA damage</keyword>
<keyword id="KW-0234">DNA repair</keyword>
<keyword id="KW-0235">DNA replication</keyword>
<keyword id="KW-0238">DNA-binding</keyword>
<keyword id="KW-0547">Nucleotide-binding</keyword>
<keyword id="KW-1185">Reference proteome</keyword>
<keyword id="KW-0742">SOS response</keyword>
<organism>
    <name type="scientific">Mycobacterium tuberculosis (strain ATCC 25177 / H37Ra)</name>
    <dbReference type="NCBI Taxonomy" id="419947"/>
    <lineage>
        <taxon>Bacteria</taxon>
        <taxon>Bacillati</taxon>
        <taxon>Actinomycetota</taxon>
        <taxon>Actinomycetes</taxon>
        <taxon>Mycobacteriales</taxon>
        <taxon>Mycobacteriaceae</taxon>
        <taxon>Mycobacterium</taxon>
        <taxon>Mycobacterium tuberculosis complex</taxon>
    </lineage>
</organism>
<name>RECF_MYCTA</name>
<feature type="chain" id="PRO_1000048546" description="DNA replication and repair protein RecF">
    <location>
        <begin position="1"/>
        <end position="385"/>
    </location>
</feature>
<feature type="binding site" evidence="1">
    <location>
        <begin position="30"/>
        <end position="37"/>
    </location>
    <ligand>
        <name>ATP</name>
        <dbReference type="ChEBI" id="CHEBI:30616"/>
    </ligand>
</feature>
<protein>
    <recommendedName>
        <fullName evidence="1">DNA replication and repair protein RecF</fullName>
    </recommendedName>
</protein>